<protein>
    <recommendedName>
        <fullName evidence="1">Uridylate kinase</fullName>
        <shortName evidence="1">UK</shortName>
        <ecNumber evidence="1">2.7.4.22</ecNumber>
    </recommendedName>
    <alternativeName>
        <fullName evidence="1">Uridine monophosphate kinase</fullName>
        <shortName evidence="1">UMP kinase</shortName>
        <shortName evidence="1">UMPK</shortName>
    </alternativeName>
</protein>
<evidence type="ECO:0000255" key="1">
    <source>
        <dbReference type="HAMAP-Rule" id="MF_01220"/>
    </source>
</evidence>
<organism>
    <name type="scientific">Mycoplasmopsis pulmonis (strain UAB CTIP)</name>
    <name type="common">Mycoplasma pulmonis</name>
    <dbReference type="NCBI Taxonomy" id="272635"/>
    <lineage>
        <taxon>Bacteria</taxon>
        <taxon>Bacillati</taxon>
        <taxon>Mycoplasmatota</taxon>
        <taxon>Mycoplasmoidales</taxon>
        <taxon>Metamycoplasmataceae</taxon>
        <taxon>Mycoplasmopsis</taxon>
    </lineage>
</organism>
<accession>Q98QZ0</accession>
<gene>
    <name evidence="1" type="primary">pyrH</name>
    <name type="ordered locus">MYPU_2200</name>
</gene>
<feature type="chain" id="PRO_0000143861" description="Uridylate kinase">
    <location>
        <begin position="1"/>
        <end position="243"/>
    </location>
</feature>
<feature type="binding site" evidence="1">
    <location>
        <begin position="14"/>
        <end position="17"/>
    </location>
    <ligand>
        <name>ATP</name>
        <dbReference type="ChEBI" id="CHEBI:30616"/>
    </ligand>
</feature>
<feature type="binding site" evidence="1">
    <location>
        <position position="57"/>
    </location>
    <ligand>
        <name>UMP</name>
        <dbReference type="ChEBI" id="CHEBI:57865"/>
    </ligand>
</feature>
<feature type="binding site" evidence="1">
    <location>
        <position position="58"/>
    </location>
    <ligand>
        <name>ATP</name>
        <dbReference type="ChEBI" id="CHEBI:30616"/>
    </ligand>
</feature>
<feature type="binding site" evidence="1">
    <location>
        <position position="62"/>
    </location>
    <ligand>
        <name>ATP</name>
        <dbReference type="ChEBI" id="CHEBI:30616"/>
    </ligand>
</feature>
<feature type="binding site" evidence="1">
    <location>
        <position position="77"/>
    </location>
    <ligand>
        <name>UMP</name>
        <dbReference type="ChEBI" id="CHEBI:57865"/>
    </ligand>
</feature>
<feature type="binding site" evidence="1">
    <location>
        <begin position="139"/>
        <end position="146"/>
    </location>
    <ligand>
        <name>UMP</name>
        <dbReference type="ChEBI" id="CHEBI:57865"/>
    </ligand>
</feature>
<feature type="binding site" evidence="1">
    <location>
        <position position="167"/>
    </location>
    <ligand>
        <name>ATP</name>
        <dbReference type="ChEBI" id="CHEBI:30616"/>
    </ligand>
</feature>
<feature type="binding site" evidence="1">
    <location>
        <position position="173"/>
    </location>
    <ligand>
        <name>ATP</name>
        <dbReference type="ChEBI" id="CHEBI:30616"/>
    </ligand>
</feature>
<feature type="binding site" evidence="1">
    <location>
        <position position="176"/>
    </location>
    <ligand>
        <name>ATP</name>
        <dbReference type="ChEBI" id="CHEBI:30616"/>
    </ligand>
</feature>
<comment type="function">
    <text evidence="1">Catalyzes the reversible phosphorylation of UMP to UDP.</text>
</comment>
<comment type="catalytic activity">
    <reaction evidence="1">
        <text>UMP + ATP = UDP + ADP</text>
        <dbReference type="Rhea" id="RHEA:24400"/>
        <dbReference type="ChEBI" id="CHEBI:30616"/>
        <dbReference type="ChEBI" id="CHEBI:57865"/>
        <dbReference type="ChEBI" id="CHEBI:58223"/>
        <dbReference type="ChEBI" id="CHEBI:456216"/>
        <dbReference type="EC" id="2.7.4.22"/>
    </reaction>
</comment>
<comment type="activity regulation">
    <text evidence="1">Inhibited by UTP.</text>
</comment>
<comment type="pathway">
    <text evidence="1">Pyrimidine metabolism; CTP biosynthesis via de novo pathway; UDP from UMP (UMPK route): step 1/1.</text>
</comment>
<comment type="subunit">
    <text evidence="1">Homohexamer.</text>
</comment>
<comment type="subcellular location">
    <subcellularLocation>
        <location evidence="1">Cytoplasm</location>
    </subcellularLocation>
</comment>
<comment type="similarity">
    <text evidence="1">Belongs to the UMP kinase family.</text>
</comment>
<proteinExistence type="inferred from homology"/>
<name>PYRH_MYCPU</name>
<keyword id="KW-0067">ATP-binding</keyword>
<keyword id="KW-0963">Cytoplasm</keyword>
<keyword id="KW-0418">Kinase</keyword>
<keyword id="KW-0547">Nucleotide-binding</keyword>
<keyword id="KW-0665">Pyrimidine biosynthesis</keyword>
<keyword id="KW-1185">Reference proteome</keyword>
<keyword id="KW-0808">Transferase</keyword>
<reference key="1">
    <citation type="journal article" date="2001" name="Nucleic Acids Res.">
        <title>The complete genome sequence of the murine respiratory pathogen Mycoplasma pulmonis.</title>
        <authorList>
            <person name="Chambaud I."/>
            <person name="Heilig R."/>
            <person name="Ferris S."/>
            <person name="Barbe V."/>
            <person name="Samson D."/>
            <person name="Galisson F."/>
            <person name="Moszer I."/>
            <person name="Dybvig K."/>
            <person name="Wroblewski H."/>
            <person name="Viari A."/>
            <person name="Rocha E.P.C."/>
            <person name="Blanchard A."/>
        </authorList>
    </citation>
    <scope>NUCLEOTIDE SEQUENCE [LARGE SCALE GENOMIC DNA]</scope>
    <source>
        <strain>UAB CTIP</strain>
    </source>
</reference>
<dbReference type="EC" id="2.7.4.22" evidence="1"/>
<dbReference type="EMBL" id="AL445563">
    <property type="protein sequence ID" value="CAC13393.1"/>
    <property type="molecule type" value="Genomic_DNA"/>
</dbReference>
<dbReference type="PIR" id="D90539">
    <property type="entry name" value="D90539"/>
</dbReference>
<dbReference type="SMR" id="Q98QZ0"/>
<dbReference type="STRING" id="272635.gene:17576807"/>
<dbReference type="KEGG" id="mpu:MYPU_2200"/>
<dbReference type="eggNOG" id="COG0528">
    <property type="taxonomic scope" value="Bacteria"/>
</dbReference>
<dbReference type="HOGENOM" id="CLU_033861_0_1_14"/>
<dbReference type="BioCyc" id="MPUL272635:G1GT6-219-MONOMER"/>
<dbReference type="UniPathway" id="UPA00159">
    <property type="reaction ID" value="UER00275"/>
</dbReference>
<dbReference type="Proteomes" id="UP000000528">
    <property type="component" value="Chromosome"/>
</dbReference>
<dbReference type="GO" id="GO:0005737">
    <property type="term" value="C:cytoplasm"/>
    <property type="evidence" value="ECO:0007669"/>
    <property type="project" value="UniProtKB-SubCell"/>
</dbReference>
<dbReference type="GO" id="GO:0005524">
    <property type="term" value="F:ATP binding"/>
    <property type="evidence" value="ECO:0007669"/>
    <property type="project" value="UniProtKB-KW"/>
</dbReference>
<dbReference type="GO" id="GO:0033862">
    <property type="term" value="F:UMP kinase activity"/>
    <property type="evidence" value="ECO:0007669"/>
    <property type="project" value="UniProtKB-EC"/>
</dbReference>
<dbReference type="GO" id="GO:0044210">
    <property type="term" value="P:'de novo' CTP biosynthetic process"/>
    <property type="evidence" value="ECO:0007669"/>
    <property type="project" value="UniProtKB-UniRule"/>
</dbReference>
<dbReference type="GO" id="GO:0006225">
    <property type="term" value="P:UDP biosynthetic process"/>
    <property type="evidence" value="ECO:0007669"/>
    <property type="project" value="TreeGrafter"/>
</dbReference>
<dbReference type="CDD" id="cd04254">
    <property type="entry name" value="AAK_UMPK-PyrH-Ec"/>
    <property type="match status" value="1"/>
</dbReference>
<dbReference type="FunFam" id="3.40.1160.10:FF:000001">
    <property type="entry name" value="Uridylate kinase"/>
    <property type="match status" value="1"/>
</dbReference>
<dbReference type="Gene3D" id="3.40.1160.10">
    <property type="entry name" value="Acetylglutamate kinase-like"/>
    <property type="match status" value="1"/>
</dbReference>
<dbReference type="HAMAP" id="MF_01220_B">
    <property type="entry name" value="PyrH_B"/>
    <property type="match status" value="1"/>
</dbReference>
<dbReference type="InterPro" id="IPR036393">
    <property type="entry name" value="AceGlu_kinase-like_sf"/>
</dbReference>
<dbReference type="InterPro" id="IPR001048">
    <property type="entry name" value="Asp/Glu/Uridylate_kinase"/>
</dbReference>
<dbReference type="InterPro" id="IPR011817">
    <property type="entry name" value="Uridylate_kinase"/>
</dbReference>
<dbReference type="InterPro" id="IPR015963">
    <property type="entry name" value="Uridylate_kinase_bac"/>
</dbReference>
<dbReference type="NCBIfam" id="TIGR02075">
    <property type="entry name" value="pyrH_bact"/>
    <property type="match status" value="1"/>
</dbReference>
<dbReference type="PANTHER" id="PTHR42833">
    <property type="entry name" value="URIDYLATE KINASE"/>
    <property type="match status" value="1"/>
</dbReference>
<dbReference type="PANTHER" id="PTHR42833:SF4">
    <property type="entry name" value="URIDYLATE KINASE PUMPKIN, CHLOROPLASTIC"/>
    <property type="match status" value="1"/>
</dbReference>
<dbReference type="Pfam" id="PF00696">
    <property type="entry name" value="AA_kinase"/>
    <property type="match status" value="1"/>
</dbReference>
<dbReference type="PIRSF" id="PIRSF005650">
    <property type="entry name" value="Uridylate_kin"/>
    <property type="match status" value="1"/>
</dbReference>
<dbReference type="SUPFAM" id="SSF53633">
    <property type="entry name" value="Carbamate kinase-like"/>
    <property type="match status" value="1"/>
</dbReference>
<sequence>MGWFKYMYKRILLKLSGEGLANKEKNLAIDYKLVEDIAKQLKEVVKKGIEVAIVVGGGNFWRGTSAEKNGIPRNRADYIGMLATVMNGLALKSGFEKEGLVARVYSSLNLDPKVAENYINEKATKNLENNEIVIFAGGTGRPYFTTDTAATLFASEIGADAIIMGKNGVNGVYSDDPKKNKDAKKFDTITYDEVLNMNLQIMDLTAISMAKENKIELIVFDITEKNSIYNSILGKINHTKVVN</sequence>